<proteinExistence type="evidence at protein level"/>
<organismHost>
    <name type="scientific">Bos taurus</name>
    <name type="common">Bovine</name>
    <dbReference type="NCBI Taxonomy" id="9913"/>
</organismHost>
<comment type="function">
    <text evidence="2 4">FAD-dependent sulfhydryl oxidase that catalyzes disulfide bond formation. The complete pathway for formation of disulfide bonds in intracellular virion membrane proteins sequentially involves thiol-disulfide transfer between OPG072/E10, OPG128/A2.5 and OPG088/G4.</text>
</comment>
<comment type="catalytic activity">
    <reaction>
        <text>2 R'C(R)SH + O2 = R'C(R)S-S(R)CR' + H2O2</text>
        <dbReference type="Rhea" id="RHEA:17357"/>
        <dbReference type="ChEBI" id="CHEBI:15379"/>
        <dbReference type="ChEBI" id="CHEBI:16240"/>
        <dbReference type="ChEBI" id="CHEBI:16520"/>
        <dbReference type="ChEBI" id="CHEBI:17412"/>
        <dbReference type="EC" id="1.8.3.2"/>
    </reaction>
</comment>
<comment type="cofactor">
    <cofactor evidence="2">
        <name>FAD</name>
        <dbReference type="ChEBI" id="CHEBI:57692"/>
    </cofactor>
</comment>
<comment type="subunit">
    <text evidence="4">Interacts with OPG128/A2.5; this interaction involves formation of a transient disulfide-bonded intermediate, allowing disulfide bond transfer.</text>
</comment>
<comment type="subcellular location">
    <subcellularLocation>
        <location evidence="7">Virion membrane</location>
    </subcellularLocation>
    <subcellularLocation>
        <location evidence="6">Host cytoplasm</location>
    </subcellularLocation>
    <text evidence="6">Associated with crescent membranes, immature virions (IV) and mature virions (MV).</text>
</comment>
<comment type="induction">
    <text evidence="3 5">Expressed in the early phase of the viral replicative cycle.</text>
</comment>
<comment type="similarity">
    <text evidence="6">Belongs to the orthopoxvirus OPG072 family.</text>
</comment>
<keyword id="KW-1015">Disulfide bond</keyword>
<keyword id="KW-0274">FAD</keyword>
<keyword id="KW-0285">Flavoprotein</keyword>
<keyword id="KW-1035">Host cytoplasm</keyword>
<keyword id="KW-0426">Late protein</keyword>
<keyword id="KW-0472">Membrane</keyword>
<keyword id="KW-0560">Oxidoreductase</keyword>
<keyword id="KW-0676">Redox-active center</keyword>
<keyword id="KW-1185">Reference proteome</keyword>
<keyword id="KW-0812">Transmembrane</keyword>
<keyword id="KW-1133">Transmembrane helix</keyword>
<keyword id="KW-0261">Viral envelope protein</keyword>
<keyword id="KW-0946">Virion</keyword>
<reference key="1">
    <citation type="journal article" date="1990" name="Mol. Cell. Biol.">
        <title>Identification of rpo30, a vaccinia virus RNA polymerase gene with structural similarity to a eucaryotic transcription elongation factor.</title>
        <authorList>
            <person name="Ahn B.-Y."/>
            <person name="Gershon P.D."/>
            <person name="Jones E.V."/>
            <person name="Moss B."/>
        </authorList>
    </citation>
    <scope>NUCLEOTIDE SEQUENCE [GENOMIC DNA]</scope>
</reference>
<reference key="2">
    <citation type="submission" date="2003-02" db="EMBL/GenBank/DDBJ databases">
        <title>Sequencing of the coding region of Vaccinia-WR to an average 9-fold redundancy and an error rate of 0.16/10kb.</title>
        <authorList>
            <person name="Esposito J.J."/>
            <person name="Frace A.M."/>
            <person name="Sammons S.A."/>
            <person name="Olsen-Rasmussen M."/>
            <person name="Osborne J."/>
            <person name="Wohlhueter R."/>
        </authorList>
    </citation>
    <scope>NUCLEOTIDE SEQUENCE [LARGE SCALE GENOMIC DNA]</scope>
</reference>
<reference key="3">
    <citation type="journal article" date="2000" name="Virology">
        <title>Vaccinia virus E10R protein is associated with the membranes of intracellular mature virions and has a role in morphogenesis.</title>
        <authorList>
            <person name="Senkevich T.G."/>
            <person name="Weisberg A.S."/>
            <person name="Moss B."/>
        </authorList>
    </citation>
    <scope>SUBCELLULAR LOCATION</scope>
    <scope>INDUCTION</scope>
</reference>
<reference key="4">
    <citation type="journal article" date="2002" name="Proc. Natl. Acad. Sci. U.S.A.">
        <title>Complete pathway for protein disulfide bond formation encoded by poxviruses.</title>
        <authorList>
            <person name="Senkevich T.G."/>
            <person name="White C.L."/>
            <person name="Koonin E.V."/>
            <person name="Moss B."/>
        </authorList>
    </citation>
    <scope>FUNCTION</scope>
    <scope>INTERACTION WITH OPG128/A2.5</scope>
</reference>
<reference key="5">
    <citation type="journal article" date="2015" name="J. Virol.">
        <title>Deciphering poxvirus gene expression by RNA sequencing and ribosome profiling.</title>
        <authorList>
            <person name="Yang Z."/>
            <person name="Cao S."/>
            <person name="Martens C.A."/>
            <person name="Porcella S.F."/>
            <person name="Xie Z."/>
            <person name="Ma M."/>
            <person name="Shen B."/>
            <person name="Moss B."/>
        </authorList>
    </citation>
    <scope>INDUCTION</scope>
</reference>
<organism>
    <name type="scientific">Vaccinia virus (strain Western Reserve)</name>
    <name type="common">VACV</name>
    <name type="synonym">Vaccinia virus (strain WR)</name>
    <dbReference type="NCBI Taxonomy" id="10254"/>
    <lineage>
        <taxon>Viruses</taxon>
        <taxon>Varidnaviria</taxon>
        <taxon>Bamfordvirae</taxon>
        <taxon>Nucleocytoviricota</taxon>
        <taxon>Pokkesviricetes</taxon>
        <taxon>Chitovirales</taxon>
        <taxon>Poxviridae</taxon>
        <taxon>Chordopoxvirinae</taxon>
        <taxon>Orthopoxvirus</taxon>
        <taxon>Vaccinia virus</taxon>
    </lineage>
</organism>
<feature type="chain" id="PRO_0000099465" description="Probable FAD-linked sulfhydryl oxidase OPG072">
    <location>
        <begin position="1"/>
        <end position="95"/>
    </location>
</feature>
<feature type="topological domain" description="Intravirion" evidence="1">
    <location>
        <begin position="1"/>
        <end position="8"/>
    </location>
</feature>
<feature type="transmembrane region" description="Helical" evidence="1">
    <location>
        <begin position="9"/>
        <end position="25"/>
    </location>
</feature>
<feature type="topological domain" description="Virion surface" evidence="1">
    <location>
        <begin position="26"/>
        <end position="95"/>
    </location>
</feature>
<feature type="domain" description="ERV/ALR sulfhydryl oxidase" evidence="2">
    <location>
        <begin position="1"/>
        <end position="95"/>
    </location>
</feature>
<feature type="disulfide bond" description="Redox-active" evidence="2">
    <location>
        <begin position="43"/>
        <end position="46"/>
    </location>
</feature>
<evidence type="ECO:0000255" key="1"/>
<evidence type="ECO:0000255" key="2">
    <source>
        <dbReference type="PROSITE-ProRule" id="PRU00654"/>
    </source>
</evidence>
<evidence type="ECO:0000269" key="3">
    <source>
    </source>
</evidence>
<evidence type="ECO:0000269" key="4">
    <source>
    </source>
</evidence>
<evidence type="ECO:0000269" key="5">
    <source>
    </source>
</evidence>
<evidence type="ECO:0000305" key="6"/>
<evidence type="ECO:0000305" key="7">
    <source>
    </source>
</evidence>
<protein>
    <recommendedName>
        <fullName>Probable FAD-linked sulfhydryl oxidase OPG072</fullName>
        <ecNumber>1.8.3.2</ecNumber>
    </recommendedName>
</protein>
<accession>P23373</accession>
<accession>Q76ZV5</accession>
<dbReference type="EC" id="1.8.3.2"/>
<dbReference type="EMBL" id="M36339">
    <property type="protein sequence ID" value="AAB59830.1"/>
    <property type="molecule type" value="Genomic_DNA"/>
</dbReference>
<dbReference type="EMBL" id="AY243312">
    <property type="protein sequence ID" value="AAO89345.1"/>
    <property type="molecule type" value="Genomic_DNA"/>
</dbReference>
<dbReference type="PIR" id="T30803">
    <property type="entry name" value="T30803"/>
</dbReference>
<dbReference type="RefSeq" id="YP_232948.1">
    <property type="nucleotide sequence ID" value="NC_006998.1"/>
</dbReference>
<dbReference type="SMR" id="P23373"/>
<dbReference type="DNASU" id="3707599"/>
<dbReference type="GeneID" id="3707599"/>
<dbReference type="KEGG" id="vg:3707599"/>
<dbReference type="Proteomes" id="UP000000344">
    <property type="component" value="Genome"/>
</dbReference>
<dbReference type="GO" id="GO:0030430">
    <property type="term" value="C:host cell cytoplasm"/>
    <property type="evidence" value="ECO:0007669"/>
    <property type="project" value="UniProtKB-SubCell"/>
</dbReference>
<dbReference type="GO" id="GO:0016020">
    <property type="term" value="C:membrane"/>
    <property type="evidence" value="ECO:0007669"/>
    <property type="project" value="UniProtKB-KW"/>
</dbReference>
<dbReference type="GO" id="GO:0019031">
    <property type="term" value="C:viral envelope"/>
    <property type="evidence" value="ECO:0007669"/>
    <property type="project" value="UniProtKB-KW"/>
</dbReference>
<dbReference type="GO" id="GO:0055036">
    <property type="term" value="C:virion membrane"/>
    <property type="evidence" value="ECO:0007669"/>
    <property type="project" value="UniProtKB-SubCell"/>
</dbReference>
<dbReference type="GO" id="GO:0016972">
    <property type="term" value="F:thiol oxidase activity"/>
    <property type="evidence" value="ECO:0007669"/>
    <property type="project" value="UniProtKB-EC"/>
</dbReference>
<dbReference type="Gene3D" id="1.20.120.310">
    <property type="entry name" value="ERV/ALR sulfhydryl oxidase domain"/>
    <property type="match status" value="1"/>
</dbReference>
<dbReference type="InterPro" id="IPR036774">
    <property type="entry name" value="ERV/ALR_sulphydryl_oxid_sf"/>
</dbReference>
<dbReference type="InterPro" id="IPR017905">
    <property type="entry name" value="ERV/ALR_sulphydryl_oxidase"/>
</dbReference>
<dbReference type="InterPro" id="IPR006890">
    <property type="entry name" value="Sulphydryl_Oase_FAD-link_ERV1"/>
</dbReference>
<dbReference type="Pfam" id="PF04805">
    <property type="entry name" value="Pox_E10"/>
    <property type="match status" value="1"/>
</dbReference>
<dbReference type="PIRSF" id="PIRSF015696">
    <property type="entry name" value="VAC_E10R"/>
    <property type="match status" value="1"/>
</dbReference>
<dbReference type="SUPFAM" id="SSF69000">
    <property type="entry name" value="FAD-dependent thiol oxidase"/>
    <property type="match status" value="1"/>
</dbReference>
<dbReference type="PROSITE" id="PS51324">
    <property type="entry name" value="ERV_ALR"/>
    <property type="match status" value="1"/>
</dbReference>
<sequence>MNPKHWGRAVWTIIFIVLSQAGLDGNIEACKRKLYTIVSTLPCPACRRHATIAIEDNNVMSSDDLNYIYYFFIRLFNNLASDPKYAIDVTKVNPL</sequence>
<name>PG072_VACCW</name>
<gene>
    <name type="primary">OPG072</name>
    <name type="ordered locus">VACWR066</name>
    <name type="ORF">E10R</name>
</gene>